<protein>
    <recommendedName>
        <fullName>Histone H4</fullName>
    </recommendedName>
</protein>
<feature type="initiator methionine" description="Removed" evidence="1">
    <location>
        <position position="1"/>
    </location>
</feature>
<feature type="chain" id="PRO_0000158299" description="Histone H4">
    <location>
        <begin position="2"/>
        <end position="103"/>
    </location>
</feature>
<feature type="DNA-binding region">
    <location>
        <begin position="17"/>
        <end position="21"/>
    </location>
</feature>
<feature type="region of interest" description="Disordered" evidence="2">
    <location>
        <begin position="1"/>
        <end position="20"/>
    </location>
</feature>
<feature type="compositionally biased region" description="Gly residues" evidence="2">
    <location>
        <begin position="1"/>
        <end position="14"/>
    </location>
</feature>
<proteinExistence type="inferred from homology"/>
<dbReference type="EMBL" id="L41841">
    <property type="protein sequence ID" value="AAA99966.1"/>
    <property type="molecule type" value="Genomic_DNA"/>
</dbReference>
<dbReference type="EMBL" id="U16724">
    <property type="protein sequence ID" value="AAA98445.1"/>
    <property type="molecule type" value="Genomic_DNA"/>
</dbReference>
<dbReference type="EMBL" id="U16725">
    <property type="protein sequence ID" value="AAA98449.1"/>
    <property type="molecule type" value="Genomic_DNA"/>
</dbReference>
<dbReference type="EMBL" id="U16825">
    <property type="protein sequence ID" value="AAA98456.1"/>
    <property type="molecule type" value="Genomic_DNA"/>
</dbReference>
<dbReference type="PIR" id="S59586">
    <property type="entry name" value="S59586"/>
</dbReference>
<dbReference type="RefSeq" id="XP_001690685.1">
    <property type="nucleotide sequence ID" value="XM_001690633.1"/>
</dbReference>
<dbReference type="RefSeq" id="XP_001690721.1">
    <property type="nucleotide sequence ID" value="XM_001690669.1"/>
</dbReference>
<dbReference type="RefSeq" id="XP_001690810.1">
    <property type="nucleotide sequence ID" value="XM_001690758.1"/>
</dbReference>
<dbReference type="RefSeq" id="XP_001690828.1">
    <property type="nucleotide sequence ID" value="XM_001690776.1"/>
</dbReference>
<dbReference type="RefSeq" id="XP_001690996.1">
    <property type="nucleotide sequence ID" value="XM_001690944.1"/>
</dbReference>
<dbReference type="RefSeq" id="XP_001691002.1">
    <property type="nucleotide sequence ID" value="XM_001690950.1"/>
</dbReference>
<dbReference type="RefSeq" id="XP_001691010.1">
    <property type="nucleotide sequence ID" value="XM_001690958.1"/>
</dbReference>
<dbReference type="RefSeq" id="XP_001691527.1">
    <property type="nucleotide sequence ID" value="XM_001691475.1"/>
</dbReference>
<dbReference type="RefSeq" id="XP_001691544.1">
    <property type="nucleotide sequence ID" value="XM_001691492.1"/>
</dbReference>
<dbReference type="RefSeq" id="XP_001691698.1">
    <property type="nucleotide sequence ID" value="XM_001691646.1"/>
</dbReference>
<dbReference type="RefSeq" id="XP_001692372.1">
    <property type="nucleotide sequence ID" value="XM_001692320.1"/>
</dbReference>
<dbReference type="RefSeq" id="XP_001696174.1">
    <property type="nucleotide sequence ID" value="XM_001696122.1"/>
</dbReference>
<dbReference type="RefSeq" id="XP_001696191.1">
    <property type="nucleotide sequence ID" value="XM_001696139.1"/>
</dbReference>
<dbReference type="RefSeq" id="XP_001696262.1">
    <property type="nucleotide sequence ID" value="XM_001696210.1"/>
</dbReference>
<dbReference type="RefSeq" id="XP_001696277.1">
    <property type="nucleotide sequence ID" value="XM_001696225.1"/>
</dbReference>
<dbReference type="RefSeq" id="XP_001696279.1">
    <property type="nucleotide sequence ID" value="XM_001696227.1"/>
</dbReference>
<dbReference type="RefSeq" id="XP_001696285.1">
    <property type="nucleotide sequence ID" value="XM_001696233.1"/>
</dbReference>
<dbReference type="RefSeq" id="XP_001696452.1">
    <property type="nucleotide sequence ID" value="XM_001696400.1"/>
</dbReference>
<dbReference type="RefSeq" id="XP_001696459.1">
    <property type="nucleotide sequence ID" value="XM_001696407.1"/>
</dbReference>
<dbReference type="RefSeq" id="XP_001696488.1">
    <property type="nucleotide sequence ID" value="XM_001696436.1"/>
</dbReference>
<dbReference type="RefSeq" id="XP_001696520.1">
    <property type="nucleotide sequence ID" value="XM_001696468.1"/>
</dbReference>
<dbReference type="RefSeq" id="XP_001696524.1">
    <property type="nucleotide sequence ID" value="XM_001696472.1"/>
</dbReference>
<dbReference type="RefSeq" id="XP_001696553.1">
    <property type="nucleotide sequence ID" value="XM_001696501.1"/>
</dbReference>
<dbReference type="RefSeq" id="XP_001698167.1">
    <property type="nucleotide sequence ID" value="XM_001698115.1"/>
</dbReference>
<dbReference type="RefSeq" id="XP_001698253.1">
    <property type="nucleotide sequence ID" value="XM_001698201.1"/>
</dbReference>
<dbReference type="RefSeq" id="XP_001698955.1">
    <property type="nucleotide sequence ID" value="XM_001698903.1"/>
</dbReference>
<dbReference type="RefSeq" id="XP_001700398.1">
    <property type="nucleotide sequence ID" value="XM_001700346.1"/>
</dbReference>
<dbReference type="RefSeq" id="XP_001700408.1">
    <property type="nucleotide sequence ID" value="XM_001700356.1"/>
</dbReference>
<dbReference type="RefSeq" id="XP_001700424.1">
    <property type="nucleotide sequence ID" value="XM_001700372.1"/>
</dbReference>
<dbReference type="RefSeq" id="XP_001700455.1">
    <property type="nucleotide sequence ID" value="XM_001700403.1"/>
</dbReference>
<dbReference type="RefSeq" id="XP_001702964.1">
    <property type="nucleotide sequence ID" value="XM_001702912.1"/>
</dbReference>
<dbReference type="RefSeq" id="XP_001703063.1">
    <property type="nucleotide sequence ID" value="XM_001703011.1"/>
</dbReference>
<dbReference type="SMR" id="P50566"/>
<dbReference type="EnsemblPlants" id="PNW70160">
    <property type="protein sequence ID" value="PNW70160"/>
    <property type="gene ID" value="CHLRE_17g708200v5"/>
</dbReference>
<dbReference type="EnsemblPlants" id="PNW70170">
    <property type="protein sequence ID" value="PNW70170"/>
    <property type="gene ID" value="CHLRE_17g708650v5"/>
</dbReference>
<dbReference type="EnsemblPlants" id="PNW70179">
    <property type="protein sequence ID" value="PNW70179"/>
    <property type="gene ID" value="CHLRE_17g709100v5"/>
</dbReference>
<dbReference type="EnsemblPlants" id="PNW70210">
    <property type="protein sequence ID" value="PNW70210"/>
    <property type="gene ID" value="CHLRE_17g710500v5"/>
</dbReference>
<dbReference type="EnsemblPlants" id="PNW70245">
    <property type="protein sequence ID" value="PNW70245"/>
    <property type="gene ID" value="CHLRE_17g711800v5"/>
</dbReference>
<dbReference type="EnsemblPlants" id="PNW70285">
    <property type="protein sequence ID" value="PNW70285"/>
    <property type="gene ID" value="CHLRE_17g713500v5"/>
</dbReference>
<dbReference type="EnsemblPlants" id="PNW70298">
    <property type="protein sequence ID" value="PNW70298"/>
    <property type="gene ID" value="CHLRE_17g714000v5"/>
</dbReference>
<dbReference type="EnsemblPlants" id="PNW70311">
    <property type="protein sequence ID" value="PNW70311"/>
    <property type="gene ID" value="CHLRE_17g714600v5"/>
</dbReference>
<dbReference type="EnsemblPlants" id="PNW71335">
    <property type="protein sequence ID" value="PNW71335"/>
    <property type="gene ID" value="CHLRE_16g649950v5"/>
</dbReference>
<dbReference type="EnsemblPlants" id="PNW71341">
    <property type="protein sequence ID" value="PNW71341"/>
    <property type="gene ID" value="CHLRE_16g650250v5"/>
</dbReference>
<dbReference type="EnsemblPlants" id="PNW74880">
    <property type="protein sequence ID" value="PNW74880"/>
    <property type="gene ID" value="CHLRE_12g506450v5"/>
</dbReference>
<dbReference type="EnsemblPlants" id="PNW74882">
    <property type="protein sequence ID" value="PNW74882"/>
    <property type="gene ID" value="CHLRE_12g506350v5"/>
</dbReference>
<dbReference type="EnsemblPlants" id="PNW74898">
    <property type="protein sequence ID" value="PNW74898"/>
    <property type="gene ID" value="CHLRE_12g505450v5"/>
</dbReference>
<dbReference type="EnsemblPlants" id="PNW74911">
    <property type="protein sequence ID" value="PNW74911"/>
    <property type="gene ID" value="CHLRE_12g504850v5"/>
</dbReference>
<dbReference type="EnsemblPlants" id="PNW74916">
    <property type="protein sequence ID" value="PNW74916"/>
    <property type="gene ID" value="CHLRE_12g504600v5"/>
</dbReference>
<dbReference type="EnsemblPlants" id="PNW81885">
    <property type="protein sequence ID" value="PNW81885"/>
    <property type="gene ID" value="CHLRE_06g264600v5"/>
</dbReference>
<dbReference type="EnsemblPlants" id="PNW81894">
    <property type="protein sequence ID" value="PNW81894"/>
    <property type="gene ID" value="CHLRE_06g265050v5"/>
</dbReference>
<dbReference type="EnsemblPlants" id="PNW81897">
    <property type="protein sequence ID" value="PNW81897"/>
    <property type="gene ID" value="CHLRE_06g265200v5"/>
</dbReference>
<dbReference type="EnsemblPlants" id="PNW81902">
    <property type="protein sequence ID" value="PNW81902"/>
    <property type="gene ID" value="CHLRE_06g265450v5"/>
</dbReference>
<dbReference type="EnsemblPlants" id="PNW81928">
    <property type="protein sequence ID" value="PNW81928"/>
    <property type="gene ID" value="CHLRE_06g266600v5"/>
</dbReference>
<dbReference type="EnsemblPlants" id="PNW81959">
    <property type="protein sequence ID" value="PNW81959"/>
    <property type="gene ID" value="CHLRE_06g268000v5"/>
</dbReference>
<dbReference type="EnsemblPlants" id="PNW81968">
    <property type="protein sequence ID" value="PNW81968"/>
    <property type="gene ID" value="CHLRE_06g268400v5"/>
</dbReference>
<dbReference type="EnsemblPlants" id="PNW82040">
    <property type="protein sequence ID" value="PNW82040"/>
    <property type="gene ID" value="CHLRE_06g271300v5"/>
</dbReference>
<dbReference type="EnsemblPlants" id="PNW82102">
    <property type="protein sequence ID" value="PNW82102"/>
    <property type="gene ID" value="CHLRE_06g273950v5"/>
</dbReference>
<dbReference type="EnsemblPlants" id="PNW82106">
    <property type="protein sequence ID" value="PNW82106"/>
    <property type="gene ID" value="CHLRE_06g274150v5"/>
</dbReference>
<dbReference type="EnsemblPlants" id="PNW82109">
    <property type="protein sequence ID" value="PNW82109"/>
    <property type="gene ID" value="CHLRE_06g274300v5"/>
</dbReference>
<dbReference type="EnsemblPlants" id="PNW82121">
    <property type="protein sequence ID" value="PNW82121"/>
    <property type="gene ID" value="CHLRE_06g274900v5"/>
</dbReference>
<dbReference type="EnsemblPlants" id="PNW82138">
    <property type="protein sequence ID" value="PNW82138"/>
    <property type="gene ID" value="CHLRE_06g275700v5"/>
</dbReference>
<dbReference type="EnsemblPlants" id="PNW82163">
    <property type="protein sequence ID" value="PNW82163"/>
    <property type="gene ID" value="CHLRE_06g276650v5"/>
</dbReference>
<dbReference type="EnsemblPlants" id="PNW82168">
    <property type="protein sequence ID" value="PNW82168"/>
    <property type="gene ID" value="CHLRE_06g276800v5"/>
</dbReference>
<dbReference type="Gramene" id="PNW70160">
    <property type="protein sequence ID" value="PNW70160"/>
    <property type="gene ID" value="CHLRE_17g708200v5"/>
</dbReference>
<dbReference type="Gramene" id="PNW70170">
    <property type="protein sequence ID" value="PNW70170"/>
    <property type="gene ID" value="CHLRE_17g708650v5"/>
</dbReference>
<dbReference type="Gramene" id="PNW70179">
    <property type="protein sequence ID" value="PNW70179"/>
    <property type="gene ID" value="CHLRE_17g709100v5"/>
</dbReference>
<dbReference type="Gramene" id="PNW70210">
    <property type="protein sequence ID" value="PNW70210"/>
    <property type="gene ID" value="CHLRE_17g710500v5"/>
</dbReference>
<dbReference type="Gramene" id="PNW70245">
    <property type="protein sequence ID" value="PNW70245"/>
    <property type="gene ID" value="CHLRE_17g711800v5"/>
</dbReference>
<dbReference type="Gramene" id="PNW70285">
    <property type="protein sequence ID" value="PNW70285"/>
    <property type="gene ID" value="CHLRE_17g713500v5"/>
</dbReference>
<dbReference type="Gramene" id="PNW70298">
    <property type="protein sequence ID" value="PNW70298"/>
    <property type="gene ID" value="CHLRE_17g714000v5"/>
</dbReference>
<dbReference type="Gramene" id="PNW70311">
    <property type="protein sequence ID" value="PNW70311"/>
    <property type="gene ID" value="CHLRE_17g714600v5"/>
</dbReference>
<dbReference type="Gramene" id="PNW71335">
    <property type="protein sequence ID" value="PNW71335"/>
    <property type="gene ID" value="CHLRE_16g649950v5"/>
</dbReference>
<dbReference type="Gramene" id="PNW71341">
    <property type="protein sequence ID" value="PNW71341"/>
    <property type="gene ID" value="CHLRE_16g650250v5"/>
</dbReference>
<dbReference type="Gramene" id="PNW74880">
    <property type="protein sequence ID" value="PNW74880"/>
    <property type="gene ID" value="CHLRE_12g506450v5"/>
</dbReference>
<dbReference type="Gramene" id="PNW74882">
    <property type="protein sequence ID" value="PNW74882"/>
    <property type="gene ID" value="CHLRE_12g506350v5"/>
</dbReference>
<dbReference type="Gramene" id="PNW74898">
    <property type="protein sequence ID" value="PNW74898"/>
    <property type="gene ID" value="CHLRE_12g505450v5"/>
</dbReference>
<dbReference type="Gramene" id="PNW74911">
    <property type="protein sequence ID" value="PNW74911"/>
    <property type="gene ID" value="CHLRE_12g504850v5"/>
</dbReference>
<dbReference type="Gramene" id="PNW74916">
    <property type="protein sequence ID" value="PNW74916"/>
    <property type="gene ID" value="CHLRE_12g504600v5"/>
</dbReference>
<dbReference type="Gramene" id="PNW81885">
    <property type="protein sequence ID" value="PNW81885"/>
    <property type="gene ID" value="CHLRE_06g264600v5"/>
</dbReference>
<dbReference type="Gramene" id="PNW81894">
    <property type="protein sequence ID" value="PNW81894"/>
    <property type="gene ID" value="CHLRE_06g265050v5"/>
</dbReference>
<dbReference type="Gramene" id="PNW81897">
    <property type="protein sequence ID" value="PNW81897"/>
    <property type="gene ID" value="CHLRE_06g265200v5"/>
</dbReference>
<dbReference type="Gramene" id="PNW81902">
    <property type="protein sequence ID" value="PNW81902"/>
    <property type="gene ID" value="CHLRE_06g265450v5"/>
</dbReference>
<dbReference type="Gramene" id="PNW81928">
    <property type="protein sequence ID" value="PNW81928"/>
    <property type="gene ID" value="CHLRE_06g266600v5"/>
</dbReference>
<dbReference type="Gramene" id="PNW81959">
    <property type="protein sequence ID" value="PNW81959"/>
    <property type="gene ID" value="CHLRE_06g268000v5"/>
</dbReference>
<dbReference type="Gramene" id="PNW81968">
    <property type="protein sequence ID" value="PNW81968"/>
    <property type="gene ID" value="CHLRE_06g268400v5"/>
</dbReference>
<dbReference type="Gramene" id="PNW82040">
    <property type="protein sequence ID" value="PNW82040"/>
    <property type="gene ID" value="CHLRE_06g271300v5"/>
</dbReference>
<dbReference type="Gramene" id="PNW82102">
    <property type="protein sequence ID" value="PNW82102"/>
    <property type="gene ID" value="CHLRE_06g273950v5"/>
</dbReference>
<dbReference type="Gramene" id="PNW82106">
    <property type="protein sequence ID" value="PNW82106"/>
    <property type="gene ID" value="CHLRE_06g274150v5"/>
</dbReference>
<dbReference type="Gramene" id="PNW82109">
    <property type="protein sequence ID" value="PNW82109"/>
    <property type="gene ID" value="CHLRE_06g274300v5"/>
</dbReference>
<dbReference type="Gramene" id="PNW82121">
    <property type="protein sequence ID" value="PNW82121"/>
    <property type="gene ID" value="CHLRE_06g274900v5"/>
</dbReference>
<dbReference type="Gramene" id="PNW82138">
    <property type="protein sequence ID" value="PNW82138"/>
    <property type="gene ID" value="CHLRE_06g275700v5"/>
</dbReference>
<dbReference type="Gramene" id="PNW82163">
    <property type="protein sequence ID" value="PNW82163"/>
    <property type="gene ID" value="CHLRE_06g276650v5"/>
</dbReference>
<dbReference type="Gramene" id="PNW82168">
    <property type="protein sequence ID" value="PNW82168"/>
    <property type="gene ID" value="CHLRE_06g276800v5"/>
</dbReference>
<dbReference type="KEGG" id="cre:CHLRE_06g264600v5"/>
<dbReference type="KEGG" id="cre:CHLRE_06g265050v5"/>
<dbReference type="KEGG" id="cre:CHLRE_06g268000v5"/>
<dbReference type="KEGG" id="cre:CHLRE_06g268400v5"/>
<dbReference type="KEGG" id="cre:CHLRE_06g271300v5"/>
<dbReference type="KEGG" id="cre:CHLRE_06g274900v5"/>
<dbReference type="KEGG" id="cre:CHLRE_12g504600v5"/>
<dbReference type="KEGG" id="cre:CHLRE_12g504850v5"/>
<dbReference type="KEGG" id="cre:CHLRE_12g506350v5"/>
<dbReference type="KEGG" id="cre:CHLRE_12g506450v5"/>
<dbReference type="KEGG" id="cre:CHLRE_16g650250v5"/>
<dbReference type="KEGG" id="cre:CHLRE_17g708200v5"/>
<dbReference type="KEGG" id="cre:CHLRE_17g709100v5"/>
<dbReference type="KEGG" id="cre:CHLRE_17g710500v5"/>
<dbReference type="KEGG" id="cre:CHLRE_17g711800v5"/>
<dbReference type="KEGG" id="cre:CHLRE_17g713500v5"/>
<dbReference type="KEGG" id="cre:CHLRE_17g714000v5"/>
<dbReference type="KEGG" id="cre:CHLRE_17g714600v5"/>
<dbReference type="eggNOG" id="KOG3467">
    <property type="taxonomic scope" value="Eukaryota"/>
</dbReference>
<dbReference type="HOGENOM" id="CLU_109117_2_3_1"/>
<dbReference type="OMA" id="RRNRNMS"/>
<dbReference type="OrthoDB" id="529151at2759"/>
<dbReference type="GO" id="GO:0000786">
    <property type="term" value="C:nucleosome"/>
    <property type="evidence" value="ECO:0007669"/>
    <property type="project" value="UniProtKB-KW"/>
</dbReference>
<dbReference type="GO" id="GO:0005634">
    <property type="term" value="C:nucleus"/>
    <property type="evidence" value="ECO:0007669"/>
    <property type="project" value="UniProtKB-SubCell"/>
</dbReference>
<dbReference type="GO" id="GO:0003677">
    <property type="term" value="F:DNA binding"/>
    <property type="evidence" value="ECO:0007669"/>
    <property type="project" value="UniProtKB-KW"/>
</dbReference>
<dbReference type="GO" id="GO:0046982">
    <property type="term" value="F:protein heterodimerization activity"/>
    <property type="evidence" value="ECO:0007669"/>
    <property type="project" value="InterPro"/>
</dbReference>
<dbReference type="GO" id="GO:0030527">
    <property type="term" value="F:structural constituent of chromatin"/>
    <property type="evidence" value="ECO:0007669"/>
    <property type="project" value="InterPro"/>
</dbReference>
<dbReference type="CDD" id="cd22912">
    <property type="entry name" value="HFD_H4"/>
    <property type="match status" value="1"/>
</dbReference>
<dbReference type="FunFam" id="1.10.20.10:FF:000002">
    <property type="entry name" value="Histone H4"/>
    <property type="match status" value="1"/>
</dbReference>
<dbReference type="Gene3D" id="1.10.20.10">
    <property type="entry name" value="Histone, subunit A"/>
    <property type="match status" value="1"/>
</dbReference>
<dbReference type="InterPro" id="IPR035425">
    <property type="entry name" value="CENP-T/H4_C"/>
</dbReference>
<dbReference type="InterPro" id="IPR009072">
    <property type="entry name" value="Histone-fold"/>
</dbReference>
<dbReference type="InterPro" id="IPR001951">
    <property type="entry name" value="Histone_H4"/>
</dbReference>
<dbReference type="InterPro" id="IPR019809">
    <property type="entry name" value="Histone_H4_CS"/>
</dbReference>
<dbReference type="PANTHER" id="PTHR10484">
    <property type="entry name" value="HISTONE H4"/>
    <property type="match status" value="1"/>
</dbReference>
<dbReference type="Pfam" id="PF15511">
    <property type="entry name" value="CENP-T_C"/>
    <property type="match status" value="1"/>
</dbReference>
<dbReference type="PRINTS" id="PR00623">
    <property type="entry name" value="HISTONEH4"/>
</dbReference>
<dbReference type="SMART" id="SM00417">
    <property type="entry name" value="H4"/>
    <property type="match status" value="1"/>
</dbReference>
<dbReference type="SUPFAM" id="SSF47113">
    <property type="entry name" value="Histone-fold"/>
    <property type="match status" value="1"/>
</dbReference>
<dbReference type="PROSITE" id="PS00047">
    <property type="entry name" value="HISTONE_H4"/>
    <property type="match status" value="1"/>
</dbReference>
<reference key="1">
    <citation type="journal article" date="1995" name="Nucleic Acids Res.">
        <title>The uni chromosome of Chlamydomonas: histone genes and nucleosome structure.</title>
        <authorList>
            <person name="Walther Z."/>
            <person name="Hall J.L."/>
        </authorList>
    </citation>
    <scope>NUCLEOTIDE SEQUENCE [GENOMIC DNA]</scope>
    <source>
        <strain>137c / CC-125</strain>
    </source>
</reference>
<reference key="2">
    <citation type="journal article" date="1995" name="Curr. Genet.">
        <title>The organization structure and regulatory elements of Chlamydomonas histone genes reveal features linking plant and animal genes.</title>
        <authorList>
            <person name="Fabry S."/>
            <person name="Mueller K."/>
            <person name="Lindauer A."/>
            <person name="Park P.B."/>
            <person name="Cornelius T."/>
            <person name="Schmitt R."/>
        </authorList>
    </citation>
    <scope>NUCLEOTIDE SEQUENCE [GENOMIC DNA]</scope>
</reference>
<sequence>MSGRGKGGKGLGKGGAKRHRKVLRDNIQGITKPAIRRLARRGGVKRISGLIYEETRTVLKTFLENVIRDSVTYTEHARRKTVTAMDVVYALKRQGRTLYGFGG</sequence>
<accession>P50566</accession>
<evidence type="ECO:0000250" key="1"/>
<evidence type="ECO:0000256" key="2">
    <source>
        <dbReference type="SAM" id="MobiDB-lite"/>
    </source>
</evidence>
<evidence type="ECO:0000305" key="3"/>
<gene>
    <name type="primary">H4-I</name>
</gene>
<gene>
    <name type="primary">H4-II</name>
</gene>
<gene>
    <name type="primary">H4-III</name>
</gene>
<name>H4_CHLRE</name>
<comment type="function">
    <text>Core component of nucleosome. Nucleosomes wrap and compact DNA into chromatin, limiting DNA accessibility to the cellular machineries which require DNA as a template. Histones thereby play a central role in transcription regulation, DNA repair, DNA replication and chromosomal stability. DNA accessibility is regulated via a complex set of post-translational modifications of histones, also called histone code, and nucleosome remodeling.</text>
</comment>
<comment type="subunit">
    <text>The nucleosome is a histone octamer containing two molecules each of H2A, H2B, H3 and H4 assembled in one H3-H4 heterotetramer and two H2A-H2B heterodimers. The octamer wraps approximately 147 bp of DNA.</text>
</comment>
<comment type="subcellular location">
    <subcellularLocation>
        <location evidence="1">Nucleus</location>
    </subcellularLocation>
    <subcellularLocation>
        <location evidence="1">Chromosome</location>
    </subcellularLocation>
</comment>
<comment type="similarity">
    <text evidence="3">Belongs to the histone H4 family.</text>
</comment>
<organism>
    <name type="scientific">Chlamydomonas reinhardtii</name>
    <name type="common">Chlamydomonas smithii</name>
    <dbReference type="NCBI Taxonomy" id="3055"/>
    <lineage>
        <taxon>Eukaryota</taxon>
        <taxon>Viridiplantae</taxon>
        <taxon>Chlorophyta</taxon>
        <taxon>core chlorophytes</taxon>
        <taxon>Chlorophyceae</taxon>
        <taxon>CS clade</taxon>
        <taxon>Chlamydomonadales</taxon>
        <taxon>Chlamydomonadaceae</taxon>
        <taxon>Chlamydomonas</taxon>
    </lineage>
</organism>
<keyword id="KW-0158">Chromosome</keyword>
<keyword id="KW-0238">DNA-binding</keyword>
<keyword id="KW-0544">Nucleosome core</keyword>
<keyword id="KW-0539">Nucleus</keyword>